<comment type="function">
    <text evidence="3">Odorant receptor which mediates acceptance or avoidance behavior, depending on its substrates. The odorant receptor repertoire encodes a large collection of odor stimuli that vary widely in identity, intensity, and duration. May form a complex with Orco to form odorant-sensing units, providing sensitive and prolonged odorant signaling and calcium permeability.</text>
</comment>
<comment type="subunit">
    <text evidence="1">Interacts with Orco. Complexes exist early in the endomembrane system in olfactory sensory neurons (OSNs), coupling these complexes to the conserved ciliary trafficking pathway (By similarity).</text>
</comment>
<comment type="subcellular location">
    <subcellularLocation>
        <location evidence="1">Cell membrane</location>
        <topology evidence="1">Multi-pass membrane protein</topology>
    </subcellularLocation>
</comment>
<comment type="miscellaneous">
    <text>The atypical heteromeric and topological design of the odorant receptors appears to be an insect-specific solution for odor recognition, making the OR/Orco complex an attractive target for the development of highly selective insect repellents to disrupt olfactory-mediated host-seeking behaviors of insect disease vectors. Odor-evoked OR currents are independent of known G-protein-coupled second messenger pathways.</text>
</comment>
<comment type="similarity">
    <text evidence="4">Belongs to the insect chemoreceptor superfamily. Heteromeric odorant receptor channel (TC 1.A.69) family. Or49a subfamily.</text>
</comment>
<proteinExistence type="inferred from homology"/>
<dbReference type="EMBL" id="AE014297">
    <property type="protein sequence ID" value="AAF54245.2"/>
    <property type="molecule type" value="Genomic_DNA"/>
</dbReference>
<dbReference type="RefSeq" id="NP_524280.2">
    <property type="nucleotide sequence ID" value="NM_079556.3"/>
</dbReference>
<dbReference type="SMR" id="Q9VHQ6"/>
<dbReference type="FunCoup" id="Q9VHQ6">
    <property type="interactions" value="52"/>
</dbReference>
<dbReference type="STRING" id="7227.FBpp0081382"/>
<dbReference type="GlyCosmos" id="Q9VHQ6">
    <property type="glycosylation" value="1 site, No reported glycans"/>
</dbReference>
<dbReference type="GlyGen" id="Q9VHQ6">
    <property type="glycosylation" value="1 site"/>
</dbReference>
<dbReference type="PaxDb" id="7227-FBpp0081382"/>
<dbReference type="EnsemblMetazoa" id="FBtr0081899">
    <property type="protein sequence ID" value="FBpp0081382"/>
    <property type="gene ID" value="FBgn0037591"/>
</dbReference>
<dbReference type="GeneID" id="41008"/>
<dbReference type="KEGG" id="dme:Dmel_CG17911"/>
<dbReference type="AGR" id="FB:FBgn0037591"/>
<dbReference type="CTD" id="41008"/>
<dbReference type="FlyBase" id="FBgn0037591">
    <property type="gene designation" value="Or85c"/>
</dbReference>
<dbReference type="VEuPathDB" id="VectorBase:FBgn0037591"/>
<dbReference type="eggNOG" id="ENOG502SR0T">
    <property type="taxonomic scope" value="Eukaryota"/>
</dbReference>
<dbReference type="GeneTree" id="ENSGT00560000077544"/>
<dbReference type="HOGENOM" id="CLU_033399_0_0_1"/>
<dbReference type="InParanoid" id="Q9VHQ6"/>
<dbReference type="OMA" id="YANFFYK"/>
<dbReference type="OrthoDB" id="8185860at2759"/>
<dbReference type="PhylomeDB" id="Q9VHQ6"/>
<dbReference type="BioGRID-ORCS" id="41008">
    <property type="hits" value="0 hits in 1 CRISPR screen"/>
</dbReference>
<dbReference type="GenomeRNAi" id="41008"/>
<dbReference type="PRO" id="PR:Q9VHQ6"/>
<dbReference type="Proteomes" id="UP000000803">
    <property type="component" value="Chromosome 3R"/>
</dbReference>
<dbReference type="ExpressionAtlas" id="Q9VHQ6">
    <property type="expression patterns" value="baseline and differential"/>
</dbReference>
<dbReference type="GO" id="GO:0034703">
    <property type="term" value="C:cation channel complex"/>
    <property type="evidence" value="ECO:0000250"/>
    <property type="project" value="FlyBase"/>
</dbReference>
<dbReference type="GO" id="GO:0032590">
    <property type="term" value="C:dendrite membrane"/>
    <property type="evidence" value="ECO:0000250"/>
    <property type="project" value="FlyBase"/>
</dbReference>
<dbReference type="GO" id="GO:0005886">
    <property type="term" value="C:plasma membrane"/>
    <property type="evidence" value="ECO:0000250"/>
    <property type="project" value="FlyBase"/>
</dbReference>
<dbReference type="GO" id="GO:0170020">
    <property type="term" value="F:ionotropic olfactory receptor activity"/>
    <property type="evidence" value="ECO:0000250"/>
    <property type="project" value="FlyBase"/>
</dbReference>
<dbReference type="GO" id="GO:0005549">
    <property type="term" value="F:odorant binding"/>
    <property type="evidence" value="ECO:0000250"/>
    <property type="project" value="FlyBase"/>
</dbReference>
<dbReference type="GO" id="GO:0004984">
    <property type="term" value="F:olfactory receptor activity"/>
    <property type="evidence" value="ECO:0000318"/>
    <property type="project" value="GO_Central"/>
</dbReference>
<dbReference type="GO" id="GO:0050911">
    <property type="term" value="P:detection of chemical stimulus involved in sensory perception of smell"/>
    <property type="evidence" value="ECO:0000315"/>
    <property type="project" value="FlyBase"/>
</dbReference>
<dbReference type="GO" id="GO:0007165">
    <property type="term" value="P:signal transduction"/>
    <property type="evidence" value="ECO:0007669"/>
    <property type="project" value="UniProtKB-KW"/>
</dbReference>
<dbReference type="InterPro" id="IPR004117">
    <property type="entry name" value="7tm6_olfct_rcpt"/>
</dbReference>
<dbReference type="PANTHER" id="PTHR21137">
    <property type="entry name" value="ODORANT RECEPTOR"/>
    <property type="match status" value="1"/>
</dbReference>
<dbReference type="PANTHER" id="PTHR21137:SF44">
    <property type="entry name" value="ODORANT RECEPTOR 13A-RELATED"/>
    <property type="match status" value="1"/>
</dbReference>
<dbReference type="Pfam" id="PF02949">
    <property type="entry name" value="7tm_6"/>
    <property type="match status" value="1"/>
</dbReference>
<feature type="chain" id="PRO_0000174276" description="Odorant receptor 85c">
    <location>
        <begin position="1"/>
        <end position="389"/>
    </location>
</feature>
<feature type="topological domain" description="Cytoplasmic" evidence="2">
    <location>
        <begin position="1"/>
        <end position="33"/>
    </location>
</feature>
<feature type="transmembrane region" description="Helical; Name=1" evidence="2">
    <location>
        <begin position="34"/>
        <end position="54"/>
    </location>
</feature>
<feature type="topological domain" description="Extracellular" evidence="2">
    <location>
        <begin position="55"/>
        <end position="66"/>
    </location>
</feature>
<feature type="transmembrane region" description="Helical; Name=2" evidence="2">
    <location>
        <begin position="67"/>
        <end position="87"/>
    </location>
</feature>
<feature type="topological domain" description="Cytoplasmic" evidence="2">
    <location>
        <begin position="88"/>
        <end position="130"/>
    </location>
</feature>
<feature type="transmembrane region" description="Helical; Name=3" evidence="2">
    <location>
        <begin position="131"/>
        <end position="151"/>
    </location>
</feature>
<feature type="topological domain" description="Extracellular" evidence="2">
    <location>
        <begin position="152"/>
        <end position="199"/>
    </location>
</feature>
<feature type="transmembrane region" description="Helical; Name=4" evidence="2">
    <location>
        <begin position="200"/>
        <end position="220"/>
    </location>
</feature>
<feature type="topological domain" description="Cytoplasmic" evidence="2">
    <location>
        <begin position="221"/>
        <end position="259"/>
    </location>
</feature>
<feature type="transmembrane region" description="Helical; Name=5" evidence="2">
    <location>
        <begin position="260"/>
        <end position="280"/>
    </location>
</feature>
<feature type="topological domain" description="Extracellular" evidence="2">
    <location>
        <begin position="281"/>
        <end position="290"/>
    </location>
</feature>
<feature type="transmembrane region" description="Helical; Name=6" evidence="2">
    <location>
        <begin position="291"/>
        <end position="311"/>
    </location>
</feature>
<feature type="topological domain" description="Cytoplasmic" evidence="2">
    <location>
        <begin position="312"/>
        <end position="359"/>
    </location>
</feature>
<feature type="transmembrane region" description="Helical; Name=7" evidence="2">
    <location>
        <begin position="360"/>
        <end position="380"/>
    </location>
</feature>
<feature type="topological domain" description="Extracellular" evidence="2">
    <location>
        <begin position="381"/>
        <end position="389"/>
    </location>
</feature>
<feature type="glycosylation site" description="N-linked (GlcNAc...) asparagine" evidence="2">
    <location>
        <position position="178"/>
    </location>
</feature>
<keyword id="KW-1003">Cell membrane</keyword>
<keyword id="KW-0325">Glycoprotein</keyword>
<keyword id="KW-0472">Membrane</keyword>
<keyword id="KW-0552">Olfaction</keyword>
<keyword id="KW-0675">Receptor</keyword>
<keyword id="KW-1185">Reference proteome</keyword>
<keyword id="KW-0716">Sensory transduction</keyword>
<keyword id="KW-0807">Transducer</keyword>
<keyword id="KW-0812">Transmembrane</keyword>
<keyword id="KW-1133">Transmembrane helix</keyword>
<organism>
    <name type="scientific">Drosophila melanogaster</name>
    <name type="common">Fruit fly</name>
    <dbReference type="NCBI Taxonomy" id="7227"/>
    <lineage>
        <taxon>Eukaryota</taxon>
        <taxon>Metazoa</taxon>
        <taxon>Ecdysozoa</taxon>
        <taxon>Arthropoda</taxon>
        <taxon>Hexapoda</taxon>
        <taxon>Insecta</taxon>
        <taxon>Pterygota</taxon>
        <taxon>Neoptera</taxon>
        <taxon>Endopterygota</taxon>
        <taxon>Diptera</taxon>
        <taxon>Brachycera</taxon>
        <taxon>Muscomorpha</taxon>
        <taxon>Ephydroidea</taxon>
        <taxon>Drosophilidae</taxon>
        <taxon>Drosophila</taxon>
        <taxon>Sophophora</taxon>
    </lineage>
</organism>
<protein>
    <recommendedName>
        <fullName>Odorant receptor 85c</fullName>
    </recommendedName>
</protein>
<name>OR85C_DROME</name>
<sequence>MKFMKYAVFFYTSVGIEPYTIDSRSKKASLWSHLLFWANVINLSVIVFGEILYLGVAYSDGKFIDAVTVLSYIGFVIVGMSKMFFIWWKKTDLSDLVKELEHIYPNGKAEEEMYRLDRYLRSCSRISITYALLYSVLIWTFNLFSIMQFLVYEKLLKIRVVGQTLPYLMYFPWNWHENWTYYVLLFCQNFAGHTSASGQISTDLLLCAVATQVVMHFDYLARVVEKQVLDRDWSENSRFLAKTVQYHQRILRLMDVLNDIFGIPLLLNFMVSTFVICFVGFQMTVGVPPDIMIKLFLFLFSSLSQVYLICHYGQLIADASSSLSISAYKQNWQNADIRYRRALVFFIARPQRTTYLKATIFMNITRATMTDLLQVSYKFFALLRTMYIK</sequence>
<accession>Q9VHQ6</accession>
<reference key="1">
    <citation type="journal article" date="2000" name="Science">
        <title>The genome sequence of Drosophila melanogaster.</title>
        <authorList>
            <person name="Adams M.D."/>
            <person name="Celniker S.E."/>
            <person name="Holt R.A."/>
            <person name="Evans C.A."/>
            <person name="Gocayne J.D."/>
            <person name="Amanatides P.G."/>
            <person name="Scherer S.E."/>
            <person name="Li P.W."/>
            <person name="Hoskins R.A."/>
            <person name="Galle R.F."/>
            <person name="George R.A."/>
            <person name="Lewis S.E."/>
            <person name="Richards S."/>
            <person name="Ashburner M."/>
            <person name="Henderson S.N."/>
            <person name="Sutton G.G."/>
            <person name="Wortman J.R."/>
            <person name="Yandell M.D."/>
            <person name="Zhang Q."/>
            <person name="Chen L.X."/>
            <person name="Brandon R.C."/>
            <person name="Rogers Y.-H.C."/>
            <person name="Blazej R.G."/>
            <person name="Champe M."/>
            <person name="Pfeiffer B.D."/>
            <person name="Wan K.H."/>
            <person name="Doyle C."/>
            <person name="Baxter E.G."/>
            <person name="Helt G."/>
            <person name="Nelson C.R."/>
            <person name="Miklos G.L.G."/>
            <person name="Abril J.F."/>
            <person name="Agbayani A."/>
            <person name="An H.-J."/>
            <person name="Andrews-Pfannkoch C."/>
            <person name="Baldwin D."/>
            <person name="Ballew R.M."/>
            <person name="Basu A."/>
            <person name="Baxendale J."/>
            <person name="Bayraktaroglu L."/>
            <person name="Beasley E.M."/>
            <person name="Beeson K.Y."/>
            <person name="Benos P.V."/>
            <person name="Berman B.P."/>
            <person name="Bhandari D."/>
            <person name="Bolshakov S."/>
            <person name="Borkova D."/>
            <person name="Botchan M.R."/>
            <person name="Bouck J."/>
            <person name="Brokstein P."/>
            <person name="Brottier P."/>
            <person name="Burtis K.C."/>
            <person name="Busam D.A."/>
            <person name="Butler H."/>
            <person name="Cadieu E."/>
            <person name="Center A."/>
            <person name="Chandra I."/>
            <person name="Cherry J.M."/>
            <person name="Cawley S."/>
            <person name="Dahlke C."/>
            <person name="Davenport L.B."/>
            <person name="Davies P."/>
            <person name="de Pablos B."/>
            <person name="Delcher A."/>
            <person name="Deng Z."/>
            <person name="Mays A.D."/>
            <person name="Dew I."/>
            <person name="Dietz S.M."/>
            <person name="Dodson K."/>
            <person name="Doup L.E."/>
            <person name="Downes M."/>
            <person name="Dugan-Rocha S."/>
            <person name="Dunkov B.C."/>
            <person name="Dunn P."/>
            <person name="Durbin K.J."/>
            <person name="Evangelista C.C."/>
            <person name="Ferraz C."/>
            <person name="Ferriera S."/>
            <person name="Fleischmann W."/>
            <person name="Fosler C."/>
            <person name="Gabrielian A.E."/>
            <person name="Garg N.S."/>
            <person name="Gelbart W.M."/>
            <person name="Glasser K."/>
            <person name="Glodek A."/>
            <person name="Gong F."/>
            <person name="Gorrell J.H."/>
            <person name="Gu Z."/>
            <person name="Guan P."/>
            <person name="Harris M."/>
            <person name="Harris N.L."/>
            <person name="Harvey D.A."/>
            <person name="Heiman T.J."/>
            <person name="Hernandez J.R."/>
            <person name="Houck J."/>
            <person name="Hostin D."/>
            <person name="Houston K.A."/>
            <person name="Howland T.J."/>
            <person name="Wei M.-H."/>
            <person name="Ibegwam C."/>
            <person name="Jalali M."/>
            <person name="Kalush F."/>
            <person name="Karpen G.H."/>
            <person name="Ke Z."/>
            <person name="Kennison J.A."/>
            <person name="Ketchum K.A."/>
            <person name="Kimmel B.E."/>
            <person name="Kodira C.D."/>
            <person name="Kraft C.L."/>
            <person name="Kravitz S."/>
            <person name="Kulp D."/>
            <person name="Lai Z."/>
            <person name="Lasko P."/>
            <person name="Lei Y."/>
            <person name="Levitsky A.A."/>
            <person name="Li J.H."/>
            <person name="Li Z."/>
            <person name="Liang Y."/>
            <person name="Lin X."/>
            <person name="Liu X."/>
            <person name="Mattei B."/>
            <person name="McIntosh T.C."/>
            <person name="McLeod M.P."/>
            <person name="McPherson D."/>
            <person name="Merkulov G."/>
            <person name="Milshina N.V."/>
            <person name="Mobarry C."/>
            <person name="Morris J."/>
            <person name="Moshrefi A."/>
            <person name="Mount S.M."/>
            <person name="Moy M."/>
            <person name="Murphy B."/>
            <person name="Murphy L."/>
            <person name="Muzny D.M."/>
            <person name="Nelson D.L."/>
            <person name="Nelson D.R."/>
            <person name="Nelson K.A."/>
            <person name="Nixon K."/>
            <person name="Nusskern D.R."/>
            <person name="Pacleb J.M."/>
            <person name="Palazzolo M."/>
            <person name="Pittman G.S."/>
            <person name="Pan S."/>
            <person name="Pollard J."/>
            <person name="Puri V."/>
            <person name="Reese M.G."/>
            <person name="Reinert K."/>
            <person name="Remington K."/>
            <person name="Saunders R.D.C."/>
            <person name="Scheeler F."/>
            <person name="Shen H."/>
            <person name="Shue B.C."/>
            <person name="Siden-Kiamos I."/>
            <person name="Simpson M."/>
            <person name="Skupski M.P."/>
            <person name="Smith T.J."/>
            <person name="Spier E."/>
            <person name="Spradling A.C."/>
            <person name="Stapleton M."/>
            <person name="Strong R."/>
            <person name="Sun E."/>
            <person name="Svirskas R."/>
            <person name="Tector C."/>
            <person name="Turner R."/>
            <person name="Venter E."/>
            <person name="Wang A.H."/>
            <person name="Wang X."/>
            <person name="Wang Z.-Y."/>
            <person name="Wassarman D.A."/>
            <person name="Weinstock G.M."/>
            <person name="Weissenbach J."/>
            <person name="Williams S.M."/>
            <person name="Woodage T."/>
            <person name="Worley K.C."/>
            <person name="Wu D."/>
            <person name="Yang S."/>
            <person name="Yao Q.A."/>
            <person name="Ye J."/>
            <person name="Yeh R.-F."/>
            <person name="Zaveri J.S."/>
            <person name="Zhan M."/>
            <person name="Zhang G."/>
            <person name="Zhao Q."/>
            <person name="Zheng L."/>
            <person name="Zheng X.H."/>
            <person name="Zhong F.N."/>
            <person name="Zhong W."/>
            <person name="Zhou X."/>
            <person name="Zhu S.C."/>
            <person name="Zhu X."/>
            <person name="Smith H.O."/>
            <person name="Gibbs R.A."/>
            <person name="Myers E.W."/>
            <person name="Rubin G.M."/>
            <person name="Venter J.C."/>
        </authorList>
    </citation>
    <scope>NUCLEOTIDE SEQUENCE [LARGE SCALE GENOMIC DNA]</scope>
    <source>
        <strain>Berkeley</strain>
    </source>
</reference>
<reference key="2">
    <citation type="journal article" date="2002" name="Genome Biol.">
        <title>Annotation of the Drosophila melanogaster euchromatic genome: a systematic review.</title>
        <authorList>
            <person name="Misra S."/>
            <person name="Crosby M.A."/>
            <person name="Mungall C.J."/>
            <person name="Matthews B.B."/>
            <person name="Campbell K.S."/>
            <person name="Hradecky P."/>
            <person name="Huang Y."/>
            <person name="Kaminker J.S."/>
            <person name="Millburn G.H."/>
            <person name="Prochnik S.E."/>
            <person name="Smith C.D."/>
            <person name="Tupy J.L."/>
            <person name="Whitfield E.J."/>
            <person name="Bayraktaroglu L."/>
            <person name="Berman B.P."/>
            <person name="Bettencourt B.R."/>
            <person name="Celniker S.E."/>
            <person name="de Grey A.D.N.J."/>
            <person name="Drysdale R.A."/>
            <person name="Harris N.L."/>
            <person name="Richter J."/>
            <person name="Russo S."/>
            <person name="Schroeder A.J."/>
            <person name="Shu S.Q."/>
            <person name="Stapleton M."/>
            <person name="Yamada C."/>
            <person name="Ashburner M."/>
            <person name="Gelbart W.M."/>
            <person name="Rubin G.M."/>
            <person name="Lewis S.E."/>
        </authorList>
    </citation>
    <scope>GENOME REANNOTATION</scope>
    <source>
        <strain>Berkeley</strain>
    </source>
</reference>
<reference key="3">
    <citation type="journal article" date="2011" name="J. Neurosci.">
        <title>Similar odorants elicit different behavioral and physiological responses, some supersustained.</title>
        <authorList>
            <person name="Montague S.A."/>
            <person name="Mathew D."/>
            <person name="Carlson J.R."/>
        </authorList>
    </citation>
    <scope>FUNCTION</scope>
</reference>
<evidence type="ECO:0000250" key="1"/>
<evidence type="ECO:0000255" key="2"/>
<evidence type="ECO:0000269" key="3">
    <source>
    </source>
</evidence>
<evidence type="ECO:0000305" key="4"/>
<gene>
    <name type="primary">Or85c</name>
    <name type="ORF">CG17911</name>
</gene>